<feature type="chain" id="PRO_0000413945" description="Negative modulator of initiation of replication">
    <location>
        <begin position="1"/>
        <end position="179"/>
    </location>
</feature>
<sequence>MKTIEVDEDLYRFIAGQTERIGESASDILRRLLLVDNQGTVPIEEIVEPKGIVVSKEVGFTPEKFDGVKEMRSLLISDEFASLKKAIDRFMLVLSTLHKIDPLSFSEATQVKGRKRVYFADNEATLLANGNTTKPKAIPQSPFWVITNNNTSRKRQMVEQLMSRMNFQAELIEKVTGSI</sequence>
<protein>
    <recommendedName>
        <fullName evidence="1">Negative modulator of initiation of replication</fullName>
    </recommendedName>
</protein>
<gene>
    <name evidence="1" type="primary">seqA</name>
    <name type="ordered locus">VS_2253</name>
</gene>
<evidence type="ECO:0000255" key="1">
    <source>
        <dbReference type="HAMAP-Rule" id="MF_00908"/>
    </source>
</evidence>
<name>SEQA_VIBA3</name>
<comment type="function">
    <text evidence="1">Negative regulator of replication initiation, which contributes to regulation of DNA replication and ensures that replication initiation occurs exactly once per chromosome per cell cycle. Binds to pairs of hemimethylated GATC sequences in the oriC region, thus preventing assembly of replication proteins and re-initiation at newly replicated origins. Repression is relieved when the region becomes fully methylated.</text>
</comment>
<comment type="subunit">
    <text evidence="1">Homodimer. Polymerizes to form helical filaments.</text>
</comment>
<comment type="subcellular location">
    <subcellularLocation>
        <location evidence="1">Cytoplasm</location>
    </subcellularLocation>
</comment>
<comment type="similarity">
    <text evidence="1">Belongs to the SeqA family.</text>
</comment>
<keyword id="KW-0963">Cytoplasm</keyword>
<keyword id="KW-0236">DNA replication inhibitor</keyword>
<keyword id="KW-0238">DNA-binding</keyword>
<reference key="1">
    <citation type="submission" date="2009-02" db="EMBL/GenBank/DDBJ databases">
        <title>Vibrio splendidus str. LGP32 complete genome.</title>
        <authorList>
            <person name="Mazel D."/>
            <person name="Le Roux F."/>
        </authorList>
    </citation>
    <scope>NUCLEOTIDE SEQUENCE [LARGE SCALE GENOMIC DNA]</scope>
    <source>
        <strain>LGP32</strain>
    </source>
</reference>
<organism>
    <name type="scientific">Vibrio atlanticus (strain LGP32)</name>
    <name type="common">Vibrio splendidus (strain Mel32)</name>
    <dbReference type="NCBI Taxonomy" id="575788"/>
    <lineage>
        <taxon>Bacteria</taxon>
        <taxon>Pseudomonadati</taxon>
        <taxon>Pseudomonadota</taxon>
        <taxon>Gammaproteobacteria</taxon>
        <taxon>Vibrionales</taxon>
        <taxon>Vibrionaceae</taxon>
        <taxon>Vibrio</taxon>
    </lineage>
</organism>
<dbReference type="EMBL" id="FM954972">
    <property type="protein sequence ID" value="CAV19416.1"/>
    <property type="molecule type" value="Genomic_DNA"/>
</dbReference>
<dbReference type="SMR" id="B7VI46"/>
<dbReference type="STRING" id="575788.VS_2253"/>
<dbReference type="KEGG" id="vsp:VS_2253"/>
<dbReference type="eggNOG" id="COG3057">
    <property type="taxonomic scope" value="Bacteria"/>
</dbReference>
<dbReference type="HOGENOM" id="CLU_099733_0_0_6"/>
<dbReference type="Proteomes" id="UP000009100">
    <property type="component" value="Chromosome 1"/>
</dbReference>
<dbReference type="GO" id="GO:0005737">
    <property type="term" value="C:cytoplasm"/>
    <property type="evidence" value="ECO:0007669"/>
    <property type="project" value="UniProtKB-SubCell"/>
</dbReference>
<dbReference type="GO" id="GO:0003677">
    <property type="term" value="F:DNA binding"/>
    <property type="evidence" value="ECO:0007669"/>
    <property type="project" value="UniProtKB-UniRule"/>
</dbReference>
<dbReference type="GO" id="GO:0032297">
    <property type="term" value="P:negative regulation of DNA-templated DNA replication initiation"/>
    <property type="evidence" value="ECO:0007669"/>
    <property type="project" value="UniProtKB-UniRule"/>
</dbReference>
<dbReference type="GO" id="GO:0006355">
    <property type="term" value="P:regulation of DNA-templated transcription"/>
    <property type="evidence" value="ECO:0007669"/>
    <property type="project" value="InterPro"/>
</dbReference>
<dbReference type="Gene3D" id="1.10.1220.10">
    <property type="entry name" value="Met repressor-like"/>
    <property type="match status" value="1"/>
</dbReference>
<dbReference type="Gene3D" id="1.20.1380.10">
    <property type="entry name" value="Replication modulator SeqA, C-terminal DNA-binding domain"/>
    <property type="match status" value="1"/>
</dbReference>
<dbReference type="HAMAP" id="MF_00908">
    <property type="entry name" value="SeqA"/>
    <property type="match status" value="1"/>
</dbReference>
<dbReference type="InterPro" id="IPR013321">
    <property type="entry name" value="Arc_rbn_hlx_hlx"/>
</dbReference>
<dbReference type="InterPro" id="IPR010985">
    <property type="entry name" value="Ribbon_hlx_hlx"/>
</dbReference>
<dbReference type="InterPro" id="IPR005621">
    <property type="entry name" value="SeqA"/>
</dbReference>
<dbReference type="InterPro" id="IPR026577">
    <property type="entry name" value="SeqA_DNA-bd_C"/>
</dbReference>
<dbReference type="InterPro" id="IPR036835">
    <property type="entry name" value="SeqA_DNA-bd_C_sf"/>
</dbReference>
<dbReference type="InterPro" id="IPR033761">
    <property type="entry name" value="SeqA_N"/>
</dbReference>
<dbReference type="NCBIfam" id="NF008389">
    <property type="entry name" value="PRK11187.1"/>
    <property type="match status" value="1"/>
</dbReference>
<dbReference type="Pfam" id="PF03925">
    <property type="entry name" value="SeqA"/>
    <property type="match status" value="1"/>
</dbReference>
<dbReference type="Pfam" id="PF17206">
    <property type="entry name" value="SeqA_N"/>
    <property type="match status" value="1"/>
</dbReference>
<dbReference type="PIRSF" id="PIRSF019401">
    <property type="entry name" value="SeqA"/>
    <property type="match status" value="1"/>
</dbReference>
<dbReference type="SUPFAM" id="SSF82808">
    <property type="entry name" value="Replication modulator SeqA, C-terminal DNA-binding domain"/>
    <property type="match status" value="1"/>
</dbReference>
<dbReference type="SUPFAM" id="SSF47598">
    <property type="entry name" value="Ribbon-helix-helix"/>
    <property type="match status" value="1"/>
</dbReference>
<accession>B7VI46</accession>
<proteinExistence type="inferred from homology"/>